<gene>
    <name type="primary">ATP6</name>
</gene>
<comment type="function">
    <text>Mitochondrial membrane ATP synthase (F(1)F(0) ATP synthase or Complex V) produces ATP from ADP in the presence of a proton gradient across the membrane which is generated by electron transport complexes of the respiratory chain. F-type ATPases consist of two structural domains, F(1) - containing the extramembraneous catalytic core and F(0) - containing the membrane proton channel, linked together by a central stalk and a peripheral stalk. During catalysis, ATP synthesis in the catalytic domain of F(1) is coupled via a rotary mechanism of the central stalk subunits to proton translocation. Key component of the proton channel; it may play a direct role in the translocation of protons across the membrane.</text>
</comment>
<comment type="subunit">
    <text evidence="1">F-type ATPases have 2 components, CF(1) - the catalytic core - and CF(0) - the membrane proton channel. CF(1) has five subunits: alpha(3), beta(3), gamma(1), delta(1), epsilon(1). CF(0) has three main subunits: a, b and c (By similarity).</text>
</comment>
<comment type="subcellular location">
    <subcellularLocation>
        <location>Mitochondrion inner membrane</location>
        <topology>Multi-pass membrane protein</topology>
    </subcellularLocation>
</comment>
<comment type="similarity">
    <text evidence="3">Belongs to the ATPase A chain family.</text>
</comment>
<evidence type="ECO:0000250" key="1"/>
<evidence type="ECO:0000255" key="2"/>
<evidence type="ECO:0000305" key="3"/>
<dbReference type="EMBL" id="X88896">
    <property type="protein sequence ID" value="CAA61355.1"/>
    <property type="molecule type" value="Genomic_DNA"/>
</dbReference>
<dbReference type="PIR" id="S65032">
    <property type="entry name" value="S65032"/>
</dbReference>
<dbReference type="SMR" id="Q36835"/>
<dbReference type="GO" id="GO:0005743">
    <property type="term" value="C:mitochondrial inner membrane"/>
    <property type="evidence" value="ECO:0007669"/>
    <property type="project" value="UniProtKB-SubCell"/>
</dbReference>
<dbReference type="GO" id="GO:0045259">
    <property type="term" value="C:proton-transporting ATP synthase complex"/>
    <property type="evidence" value="ECO:0007669"/>
    <property type="project" value="UniProtKB-KW"/>
</dbReference>
<dbReference type="GO" id="GO:0046933">
    <property type="term" value="F:proton-transporting ATP synthase activity, rotational mechanism"/>
    <property type="evidence" value="ECO:0007669"/>
    <property type="project" value="TreeGrafter"/>
</dbReference>
<dbReference type="CDD" id="cd00310">
    <property type="entry name" value="ATP-synt_Fo_a_6"/>
    <property type="match status" value="1"/>
</dbReference>
<dbReference type="FunFam" id="1.20.120.220:FF:000003">
    <property type="entry name" value="ATP synthase subunit a"/>
    <property type="match status" value="1"/>
</dbReference>
<dbReference type="Gene3D" id="1.20.120.220">
    <property type="entry name" value="ATP synthase, F0 complex, subunit A"/>
    <property type="match status" value="1"/>
</dbReference>
<dbReference type="HAMAP" id="MF_01393">
    <property type="entry name" value="ATP_synth_a_bact"/>
    <property type="match status" value="1"/>
</dbReference>
<dbReference type="InterPro" id="IPR000568">
    <property type="entry name" value="ATP_synth_F0_asu"/>
</dbReference>
<dbReference type="InterPro" id="IPR023011">
    <property type="entry name" value="ATP_synth_F0_asu_AS"/>
</dbReference>
<dbReference type="InterPro" id="IPR045083">
    <property type="entry name" value="ATP_synth_F0_asu_bact/mt"/>
</dbReference>
<dbReference type="InterPro" id="IPR035908">
    <property type="entry name" value="F0_ATP_A_sf"/>
</dbReference>
<dbReference type="NCBIfam" id="TIGR01131">
    <property type="entry name" value="ATP_synt_6_or_A"/>
    <property type="match status" value="1"/>
</dbReference>
<dbReference type="NCBIfam" id="NF004482">
    <property type="entry name" value="PRK05815.2-4"/>
    <property type="match status" value="1"/>
</dbReference>
<dbReference type="PANTHER" id="PTHR11410">
    <property type="entry name" value="ATP SYNTHASE SUBUNIT A"/>
    <property type="match status" value="1"/>
</dbReference>
<dbReference type="PANTHER" id="PTHR11410:SF0">
    <property type="entry name" value="ATP SYNTHASE SUBUNIT A"/>
    <property type="match status" value="1"/>
</dbReference>
<dbReference type="Pfam" id="PF00119">
    <property type="entry name" value="ATP-synt_A"/>
    <property type="match status" value="1"/>
</dbReference>
<dbReference type="PRINTS" id="PR00123">
    <property type="entry name" value="ATPASEA"/>
</dbReference>
<dbReference type="SUPFAM" id="SSF81336">
    <property type="entry name" value="F1F0 ATP synthase subunit A"/>
    <property type="match status" value="1"/>
</dbReference>
<dbReference type="PROSITE" id="PS00449">
    <property type="entry name" value="ATPASE_A"/>
    <property type="match status" value="1"/>
</dbReference>
<protein>
    <recommendedName>
        <fullName>ATP synthase subunit a</fullName>
    </recommendedName>
    <alternativeName>
        <fullName>F-ATPase protein 6</fullName>
    </alternativeName>
</protein>
<geneLocation type="mitochondrion"/>
<reference key="1">
    <citation type="journal article" date="1995" name="Curr. Genet.">
        <title>Organisation of the mitochondrial genome of Trichophyton rubrum. DNA sequence analysis of the ND4 gene, the ATPase subunit-6 gene, the ribosomal RNA small-subunit gene, the ND6 gene, the COXIII gene, the ATPase subunit-8 gene and six tRNA genes that correspond respectively to the tyrosine, lysine, glutamine, asparagine, isoleucine and tryptophan isoacceptors.</title>
        <authorList>
            <person name="de Bievre C."/>
            <person name="Dujon B."/>
        </authorList>
    </citation>
    <scope>NUCLEOTIDE SEQUENCE [GENOMIC DNA]</scope>
    <source>
        <strain>IP 1817.89</strain>
    </source>
</reference>
<keyword id="KW-0066">ATP synthesis</keyword>
<keyword id="KW-0138">CF(0)</keyword>
<keyword id="KW-0375">Hydrogen ion transport</keyword>
<keyword id="KW-0406">Ion transport</keyword>
<keyword id="KW-0472">Membrane</keyword>
<keyword id="KW-0496">Mitochondrion</keyword>
<keyword id="KW-0999">Mitochondrion inner membrane</keyword>
<keyword id="KW-0812">Transmembrane</keyword>
<keyword id="KW-1133">Transmembrane helix</keyword>
<keyword id="KW-0813">Transport</keyword>
<proteinExistence type="inferred from homology"/>
<accession>Q36835</accession>
<name>ATP6_TRIRU</name>
<sequence>MMFNNIISPLEQFEIKDLFSLNINIINLKMSLTNFGFYIIISTIIILTLHLLITYNNKLISNSWTLTKESIYATVHSVVINQINSKEGQNYFPFIYGLFIFILMNNLLGLIPYSFSSTSHFILTFFISFTVVLGATILGFQKHQLKFFSLFVPSGCPLGLLPLLVLIELISYLARNVSLGLRLSANILSGHMLLVILSDFTFKIMSSGIFYFLIGLIPLAFIFAFSGLELGIAFIQSQVFIVLTCSYIRDSLELH</sequence>
<feature type="propeptide" id="PRO_0000002622" description="Removed in mature form" evidence="1">
    <location>
        <begin position="1"/>
        <end position="7"/>
    </location>
</feature>
<feature type="chain" id="PRO_0000002623" description="ATP synthase subunit a">
    <location>
        <begin position="8"/>
        <end position="255"/>
    </location>
</feature>
<feature type="transmembrane region" description="Helical" evidence="2">
    <location>
        <begin position="35"/>
        <end position="55"/>
    </location>
</feature>
<feature type="transmembrane region" description="Helical" evidence="2">
    <location>
        <begin position="91"/>
        <end position="111"/>
    </location>
</feature>
<feature type="transmembrane region" description="Helical" evidence="2">
    <location>
        <begin position="120"/>
        <end position="140"/>
    </location>
</feature>
<feature type="transmembrane region" description="Helical" evidence="2">
    <location>
        <begin position="147"/>
        <end position="167"/>
    </location>
</feature>
<feature type="transmembrane region" description="Helical" evidence="2">
    <location>
        <begin position="177"/>
        <end position="197"/>
    </location>
</feature>
<feature type="transmembrane region" description="Helical" evidence="2">
    <location>
        <begin position="208"/>
        <end position="228"/>
    </location>
</feature>
<organism>
    <name type="scientific">Trichophyton rubrum</name>
    <name type="common">Athlete's foot fungus</name>
    <name type="synonym">Epidermophyton rubrum</name>
    <dbReference type="NCBI Taxonomy" id="5551"/>
    <lineage>
        <taxon>Eukaryota</taxon>
        <taxon>Fungi</taxon>
        <taxon>Dikarya</taxon>
        <taxon>Ascomycota</taxon>
        <taxon>Pezizomycotina</taxon>
        <taxon>Eurotiomycetes</taxon>
        <taxon>Eurotiomycetidae</taxon>
        <taxon>Onygenales</taxon>
        <taxon>Arthrodermataceae</taxon>
        <taxon>Trichophyton</taxon>
    </lineage>
</organism>